<comment type="function">
    <text evidence="2">Required for normal male fertility via maintenance of epithelial cell morphology in the caput epididymis and subsequently correct epididymis lumen structure required for sperm development (By similarity). Plays a role in sperm motility, flagella morphology and tyrosine phosphorylation during sperm capacitance (By similarity). Plays a role in normal expression levels of HSPA5, ITM2B and ADAM2 in sperm both prior to and post-capacitation (By similarity). This is a non catalytic metalloprotease-like protein (By similarity).</text>
</comment>
<comment type="subunit">
    <text evidence="2">Interacts with ITM2B in sperm; the interaction increases following capacitation (By similarity). Interacts with HSPA5 and CANX (By similarity).</text>
</comment>
<comment type="subcellular location">
    <subcellularLocation>
        <location evidence="8">Membrane</location>
        <topology evidence="3">Single-pass type I membrane protein</topology>
    </subcellularLocation>
</comment>
<comment type="alternative products">
    <event type="alternative splicing"/>
    <isoform>
        <id>Q9H2U9-1</id>
        <name>1</name>
        <sequence type="displayed"/>
    </isoform>
    <isoform>
        <id>Q9H2U9-2</id>
        <name>2</name>
        <sequence type="described" ref="VSP_056602 VSP_056603"/>
    </isoform>
</comment>
<comment type="disease">
    <text evidence="6">Has been found to be frequently mutated in melanoma (PubMed:21618342). ADAM7 mutations may play a role in melanoma progression and metastasis (PubMed:21618342). Expressed in melanoma cells but not in healthy melanocytes (PubMed:21618342).</text>
</comment>
<proteinExistence type="evidence at protein level"/>
<sequence length="754" mass="85669">MLPGCIFLMILLIPQVKEKFILGVEGQQLVRPKKLPLIQKRDTGHTHDDDILKTYEEELLYEIKLNRKTLVLHLLRSREFLGSNYSETFYSMKGEAFTRHPQIMDHCFYQGSIVHEYDSAASISTCNGLRGFFRINDQRYLIEPVKYSDEGEHLVFKYNLRVPYGANYSCTELNFTRKTVPGDNESEEDSKIKGIHDEKYVELFIVADDTVYRRNGHPHNKLRNRIWGMVNFVNMIYKTLNIHVTLVGIEIWTHEDKIELYSNIETTLLRFSFWQEKILKTRKDFDHVVLLSGKWLYSHVQGISYPGGMCLPYYSTSIIKDLLPDTNIIANRMAHQLGHNLGMQHDEFPCTCPSGKCVMDSDGSIPALKFSKCSQNQYHQYLKDYKPTCMLNIPFPYNFHDFQFCGNKKLDEGEECDCGPAQECTNPCCDAHTCVLKPGFTCAEGECCESCQIKKAGSICRPAKDECDFPEMCTGHSPACPKDQFRVNGFPCKNSEGYCFMGKCPTREDQCSELFDDEAIESHDICYKMNTKGNKFGYCKNKENRFLPCEEKDVRCGKIYCTGGELSSLLGEDKTYHLKDPQKNATVKCKTIFLYHDSTDIGLVASGTKCGEGMVCNNGECLNMEKVYISTNCPSQCNENPVDGHGLQCHCEEGQAPVACEETLHVTNITILVVVLVLVIVGIGVLILLVRYRKCIKLKQVQSPPTETLGVENKGYFGDEQQIRTEPILPEIHFLNKPASKDSRGIADPNQSAK</sequence>
<organism>
    <name type="scientific">Homo sapiens</name>
    <name type="common">Human</name>
    <dbReference type="NCBI Taxonomy" id="9606"/>
    <lineage>
        <taxon>Eukaryota</taxon>
        <taxon>Metazoa</taxon>
        <taxon>Chordata</taxon>
        <taxon>Craniata</taxon>
        <taxon>Vertebrata</taxon>
        <taxon>Euteleostomi</taxon>
        <taxon>Mammalia</taxon>
        <taxon>Eutheria</taxon>
        <taxon>Euarchontoglires</taxon>
        <taxon>Primates</taxon>
        <taxon>Haplorrhini</taxon>
        <taxon>Catarrhini</taxon>
        <taxon>Hominidae</taxon>
        <taxon>Homo</taxon>
    </lineage>
</organism>
<feature type="signal peptide" evidence="3">
    <location>
        <begin position="1"/>
        <end position="18"/>
    </location>
</feature>
<feature type="propeptide" id="PRO_0000029052" evidence="1">
    <location>
        <begin position="19"/>
        <end position="176"/>
    </location>
</feature>
<feature type="chain" id="PRO_0000029053" description="Disintegrin and metalloproteinase domain-containing protein 7">
    <location>
        <begin position="177"/>
        <end position="754"/>
    </location>
</feature>
<feature type="topological domain" description="Extracellular" evidence="3">
    <location>
        <begin position="19"/>
        <end position="668"/>
    </location>
</feature>
<feature type="transmembrane region" description="Helical" evidence="3">
    <location>
        <begin position="669"/>
        <end position="689"/>
    </location>
</feature>
<feature type="topological domain" description="Cytoplasmic" evidence="3">
    <location>
        <begin position="690"/>
        <end position="754"/>
    </location>
</feature>
<feature type="domain" description="Peptidase M12B" evidence="5">
    <location>
        <begin position="199"/>
        <end position="394"/>
    </location>
</feature>
<feature type="domain" description="Disintegrin" evidence="4">
    <location>
        <begin position="402"/>
        <end position="488"/>
    </location>
</feature>
<feature type="glycosylation site" description="N-linked (GlcNAc...) asparagine" evidence="3">
    <location>
        <position position="84"/>
    </location>
</feature>
<feature type="glycosylation site" description="N-linked (GlcNAc...) asparagine" evidence="3">
    <location>
        <position position="167"/>
    </location>
</feature>
<feature type="glycosylation site" description="N-linked (GlcNAc...) asparagine" evidence="3">
    <location>
        <position position="174"/>
    </location>
</feature>
<feature type="glycosylation site" description="N-linked (GlcNAc...) asparagine" evidence="3">
    <location>
        <position position="184"/>
    </location>
</feature>
<feature type="glycosylation site" description="N-linked (GlcNAc...) asparagine" evidence="3">
    <location>
        <position position="584"/>
    </location>
</feature>
<feature type="glycosylation site" description="N-linked (GlcNAc...) asparagine" evidence="3">
    <location>
        <position position="668"/>
    </location>
</feature>
<feature type="disulfide bond" evidence="1">
    <location>
        <begin position="310"/>
        <end position="389"/>
    </location>
</feature>
<feature type="disulfide bond" evidence="1">
    <location>
        <begin position="350"/>
        <end position="373"/>
    </location>
</feature>
<feature type="disulfide bond" evidence="1">
    <location>
        <begin position="352"/>
        <end position="357"/>
    </location>
</feature>
<feature type="disulfide bond" evidence="1">
    <location>
        <begin position="460"/>
        <end position="480"/>
    </location>
</feature>
<feature type="splice variant" id="VSP_056602" description="In isoform 2." evidence="7">
    <original>GIHDEKYVELFIVADDT</original>
    <variation>VSTLLLSLPQMKHLLFS</variation>
    <location>
        <begin position="194"/>
        <end position="210"/>
    </location>
</feature>
<feature type="splice variant" id="VSP_056603" description="In isoform 2." evidence="7">
    <location>
        <begin position="211"/>
        <end position="754"/>
    </location>
</feature>
<feature type="sequence variant" id="VAR_066296" description="In a cutaneous metastatic melanoma sample; somatic mutation; dbSNP:rs150319320." evidence="6">
    <original>P</original>
    <variation>S</variation>
    <location>
        <position position="14"/>
    </location>
</feature>
<feature type="sequence variant" id="VAR_046728" description="In dbSNP:rs34852692.">
    <original>E</original>
    <variation>Q</variation>
    <location>
        <position position="25"/>
    </location>
</feature>
<feature type="sequence variant" id="VAR_066297" description="In a cutaneous metastatic melanoma sample; somatic mutation; dbSNP:rs137990671." evidence="6">
    <original>R</original>
    <variation>C</variation>
    <location>
        <position position="31"/>
    </location>
</feature>
<feature type="sequence variant" id="VAR_066298" description="In a cutaneous metastatic melanoma sample; somatic mutation; dbSNP:rs267601866." evidence="6">
    <original>P</original>
    <variation>S</variation>
    <location>
        <position position="36"/>
    </location>
</feature>
<feature type="sequence variant" id="VAR_066299" description="In a cutaneous metastatic melanoma sample; somatic mutation; dbSNP:rs267601867." evidence="6">
    <original>H</original>
    <variation>Y</variation>
    <location>
        <position position="106"/>
    </location>
</feature>
<feature type="sequence variant" id="VAR_066300" description="Detected in a melanoma cell line." evidence="6">
    <original>L</original>
    <variation>P</variation>
    <location>
        <position position="173"/>
    </location>
</feature>
<feature type="sequence variant" id="VAR_066301" description="In a cutaneous metastatic melanoma sample; somatic mutation." evidence="6">
    <original>V</original>
    <variation>A</variation>
    <location>
        <position position="180"/>
    </location>
</feature>
<feature type="sequence variant" id="VAR_046729" description="In dbSNP:rs7829386.">
    <original>I</original>
    <variation>V</variation>
    <location>
        <position position="205"/>
    </location>
</feature>
<feature type="sequence variant" id="VAR_066302" description="In a cutaneous metastatic melanoma sample; somatic mutation; does not affect cell growth but conferes reduced cell adhesion to laminin-1." evidence="6">
    <original>H</original>
    <variation>Y</variation>
    <location>
        <position position="243"/>
    </location>
</feature>
<feature type="sequence variant" id="VAR_046730" description="In dbSNP:rs13255694.">
    <original>V</original>
    <variation>M</variation>
    <location>
        <position position="244"/>
    </location>
</feature>
<feature type="sequence variant" id="VAR_066303" description="In a cutaneous metastatic melanoma sample; somatic mutation; dbSNP:rs2129389444." evidence="6">
    <original>G</original>
    <variation>E</variation>
    <location>
        <position position="302"/>
    </location>
</feature>
<feature type="sequence variant" id="VAR_066304" description="In a cutaneous metastatic melanoma sample; somatic mutation; does not affect cell growth but conferes reduced cell adhesion to collagen IV; dbSNP:rs267601868." evidence="6">
    <original>M</original>
    <variation>I</variation>
    <location>
        <position position="359"/>
    </location>
</feature>
<feature type="sequence variant" id="VAR_046731" description="In dbSNP:rs3736281.">
    <original>I</original>
    <variation>T</variation>
    <location>
        <position position="453"/>
    </location>
</feature>
<feature type="sequence variant" id="VAR_066305" description="In a cutaneous metastatic melanoma sample; somatic mutation; dbSNP:rs867202281." evidence="6">
    <original>G</original>
    <variation>E</variation>
    <location>
        <position position="533"/>
    </location>
</feature>
<feature type="sequence variant" id="VAR_046732" description="In dbSNP:rs2307044.">
    <original>L</original>
    <variation>V</variation>
    <location>
        <position position="570"/>
    </location>
</feature>
<feature type="sequence variant" id="VAR_066306" description="Detected in a melanoma cell line." evidence="6">
    <original>F</original>
    <variation>L</variation>
    <location>
        <position position="593"/>
    </location>
</feature>
<feature type="sequence variant" id="VAR_046733" description="In dbSNP:rs13259668.">
    <original>N</original>
    <variation>H</variation>
    <location>
        <position position="638"/>
    </location>
</feature>
<feature type="sequence variant" id="VAR_066307" description="In a cutaneous metastatic melanoma sample; somatic mutation; does not affect cell growth but conferes reduced cell adhesion to collagen IV and laminin-1; increases cell migration capabilities compared to wild-type; dbSNP:rs1034941983." evidence="6">
    <original>E</original>
    <variation>K</variation>
    <location>
        <position position="639"/>
    </location>
</feature>
<feature type="sequence variant" id="VAR_066308" description="In a cutaneous metastatic melanoma sample; somatic mutation; does not affect cell growth but conferes reduced cell adhesion to collagen IV and laminin-1; increases cell migration capabilities compared to wild-type." evidence="6">
    <original>S</original>
    <variation>N</variation>
    <location>
        <position position="703"/>
    </location>
</feature>
<feature type="sequence variant" id="VAR_046734" description="In dbSNP:rs6980829.">
    <original>L</original>
    <variation>P</variation>
    <location>
        <position position="735"/>
    </location>
</feature>
<feature type="sequence conflict" description="In Ref. 1; AAG43987." evidence="8" ref="1">
    <original>E</original>
    <variation>G</variation>
    <location>
        <position position="95"/>
    </location>
</feature>
<feature type="sequence conflict" description="In Ref. 5; AAC36742." evidence="8" ref="5">
    <original>KF</original>
    <variation>DL</variation>
    <location>
        <begin position="369"/>
        <end position="370"/>
    </location>
</feature>
<feature type="sequence conflict" description="In Ref. 5; AAC36742." evidence="8" ref="5">
    <original>S</original>
    <variation>R</variation>
    <location>
        <position position="374"/>
    </location>
</feature>
<feature type="sequence conflict" description="In Ref. 1; AAG43987." evidence="8" ref="1">
    <original>E</original>
    <variation>D</variation>
    <location>
        <position position="518"/>
    </location>
</feature>
<gene>
    <name evidence="9" type="primary">ADAM7</name>
    <name evidence="9" type="synonym">GP83</name>
</gene>
<evidence type="ECO:0000250" key="1"/>
<evidence type="ECO:0000250" key="2">
    <source>
        <dbReference type="UniProtKB" id="O35227"/>
    </source>
</evidence>
<evidence type="ECO:0000255" key="3"/>
<evidence type="ECO:0000255" key="4">
    <source>
        <dbReference type="PROSITE-ProRule" id="PRU00068"/>
    </source>
</evidence>
<evidence type="ECO:0000255" key="5">
    <source>
        <dbReference type="PROSITE-ProRule" id="PRU00276"/>
    </source>
</evidence>
<evidence type="ECO:0000269" key="6">
    <source>
    </source>
</evidence>
<evidence type="ECO:0000303" key="7">
    <source>
    </source>
</evidence>
<evidence type="ECO:0000305" key="8"/>
<evidence type="ECO:0000312" key="9">
    <source>
        <dbReference type="HGNC" id="HGNC:214"/>
    </source>
</evidence>
<protein>
    <recommendedName>
        <fullName evidence="9">Disintegrin and metalloproteinase domain-containing protein 7</fullName>
        <shortName>ADAM 7</shortName>
    </recommendedName>
    <alternativeName>
        <fullName>Sperm maturation-related glycoprotein GP-83</fullName>
    </alternativeName>
</protein>
<keyword id="KW-0025">Alternative splicing</keyword>
<keyword id="KW-1015">Disulfide bond</keyword>
<keyword id="KW-0325">Glycoprotein</keyword>
<keyword id="KW-0472">Membrane</keyword>
<keyword id="KW-1267">Proteomics identification</keyword>
<keyword id="KW-1185">Reference proteome</keyword>
<keyword id="KW-0732">Signal</keyword>
<keyword id="KW-0812">Transmembrane</keyword>
<keyword id="KW-1133">Transmembrane helix</keyword>
<reference key="1">
    <citation type="submission" date="1999-12" db="EMBL/GenBank/DDBJ databases">
        <title>Expression of human ADAM7 (GP-83).</title>
        <authorList>
            <person name="Lin Y.C."/>
            <person name="Lee Y.M."/>
            <person name="Sun G.H."/>
            <person name="Liu H.W."/>
        </authorList>
    </citation>
    <scope>NUCLEOTIDE SEQUENCE [MRNA] (ISOFORM 1)</scope>
    <source>
        <tissue>Epididymis</tissue>
    </source>
</reference>
<reference key="2">
    <citation type="journal article" date="2004" name="Nat. Genet.">
        <title>Complete sequencing and characterization of 21,243 full-length human cDNAs.</title>
        <authorList>
            <person name="Ota T."/>
            <person name="Suzuki Y."/>
            <person name="Nishikawa T."/>
            <person name="Otsuki T."/>
            <person name="Sugiyama T."/>
            <person name="Irie R."/>
            <person name="Wakamatsu A."/>
            <person name="Hayashi K."/>
            <person name="Sato H."/>
            <person name="Nagai K."/>
            <person name="Kimura K."/>
            <person name="Makita H."/>
            <person name="Sekine M."/>
            <person name="Obayashi M."/>
            <person name="Nishi T."/>
            <person name="Shibahara T."/>
            <person name="Tanaka T."/>
            <person name="Ishii S."/>
            <person name="Yamamoto J."/>
            <person name="Saito K."/>
            <person name="Kawai Y."/>
            <person name="Isono Y."/>
            <person name="Nakamura Y."/>
            <person name="Nagahari K."/>
            <person name="Murakami K."/>
            <person name="Yasuda T."/>
            <person name="Iwayanagi T."/>
            <person name="Wagatsuma M."/>
            <person name="Shiratori A."/>
            <person name="Sudo H."/>
            <person name="Hosoiri T."/>
            <person name="Kaku Y."/>
            <person name="Kodaira H."/>
            <person name="Kondo H."/>
            <person name="Sugawara M."/>
            <person name="Takahashi M."/>
            <person name="Kanda K."/>
            <person name="Yokoi T."/>
            <person name="Furuya T."/>
            <person name="Kikkawa E."/>
            <person name="Omura Y."/>
            <person name="Abe K."/>
            <person name="Kamihara K."/>
            <person name="Katsuta N."/>
            <person name="Sato K."/>
            <person name="Tanikawa M."/>
            <person name="Yamazaki M."/>
            <person name="Ninomiya K."/>
            <person name="Ishibashi T."/>
            <person name="Yamashita H."/>
            <person name="Murakawa K."/>
            <person name="Fujimori K."/>
            <person name="Tanai H."/>
            <person name="Kimata M."/>
            <person name="Watanabe M."/>
            <person name="Hiraoka S."/>
            <person name="Chiba Y."/>
            <person name="Ishida S."/>
            <person name="Ono Y."/>
            <person name="Takiguchi S."/>
            <person name="Watanabe S."/>
            <person name="Yosida M."/>
            <person name="Hotuta T."/>
            <person name="Kusano J."/>
            <person name="Kanehori K."/>
            <person name="Takahashi-Fujii A."/>
            <person name="Hara H."/>
            <person name="Tanase T.-O."/>
            <person name="Nomura Y."/>
            <person name="Togiya S."/>
            <person name="Komai F."/>
            <person name="Hara R."/>
            <person name="Takeuchi K."/>
            <person name="Arita M."/>
            <person name="Imose N."/>
            <person name="Musashino K."/>
            <person name="Yuuki H."/>
            <person name="Oshima A."/>
            <person name="Sasaki N."/>
            <person name="Aotsuka S."/>
            <person name="Yoshikawa Y."/>
            <person name="Matsunawa H."/>
            <person name="Ichihara T."/>
            <person name="Shiohata N."/>
            <person name="Sano S."/>
            <person name="Moriya S."/>
            <person name="Momiyama H."/>
            <person name="Satoh N."/>
            <person name="Takami S."/>
            <person name="Terashima Y."/>
            <person name="Suzuki O."/>
            <person name="Nakagawa S."/>
            <person name="Senoh A."/>
            <person name="Mizoguchi H."/>
            <person name="Goto Y."/>
            <person name="Shimizu F."/>
            <person name="Wakebe H."/>
            <person name="Hishigaki H."/>
            <person name="Watanabe T."/>
            <person name="Sugiyama A."/>
            <person name="Takemoto M."/>
            <person name="Kawakami B."/>
            <person name="Yamazaki M."/>
            <person name="Watanabe K."/>
            <person name="Kumagai A."/>
            <person name="Itakura S."/>
            <person name="Fukuzumi Y."/>
            <person name="Fujimori Y."/>
            <person name="Komiyama M."/>
            <person name="Tashiro H."/>
            <person name="Tanigami A."/>
            <person name="Fujiwara T."/>
            <person name="Ono T."/>
            <person name="Yamada K."/>
            <person name="Fujii Y."/>
            <person name="Ozaki K."/>
            <person name="Hirao M."/>
            <person name="Ohmori Y."/>
            <person name="Kawabata A."/>
            <person name="Hikiji T."/>
            <person name="Kobatake N."/>
            <person name="Inagaki H."/>
            <person name="Ikema Y."/>
            <person name="Okamoto S."/>
            <person name="Okitani R."/>
            <person name="Kawakami T."/>
            <person name="Noguchi S."/>
            <person name="Itoh T."/>
            <person name="Shigeta K."/>
            <person name="Senba T."/>
            <person name="Matsumura K."/>
            <person name="Nakajima Y."/>
            <person name="Mizuno T."/>
            <person name="Morinaga M."/>
            <person name="Sasaki M."/>
            <person name="Togashi T."/>
            <person name="Oyama M."/>
            <person name="Hata H."/>
            <person name="Watanabe M."/>
            <person name="Komatsu T."/>
            <person name="Mizushima-Sugano J."/>
            <person name="Satoh T."/>
            <person name="Shirai Y."/>
            <person name="Takahashi Y."/>
            <person name="Nakagawa K."/>
            <person name="Okumura K."/>
            <person name="Nagase T."/>
            <person name="Nomura N."/>
            <person name="Kikuchi H."/>
            <person name="Masuho Y."/>
            <person name="Yamashita R."/>
            <person name="Nakai K."/>
            <person name="Yada T."/>
            <person name="Nakamura Y."/>
            <person name="Ohara O."/>
            <person name="Isogai T."/>
            <person name="Sugano S."/>
        </authorList>
    </citation>
    <scope>NUCLEOTIDE SEQUENCE [LARGE SCALE MRNA] (ISOFORM 1)</scope>
    <source>
        <tissue>Testis</tissue>
    </source>
</reference>
<reference key="3">
    <citation type="journal article" date="2006" name="Nature">
        <title>DNA sequence and analysis of human chromosome 8.</title>
        <authorList>
            <person name="Nusbaum C."/>
            <person name="Mikkelsen T.S."/>
            <person name="Zody M.C."/>
            <person name="Asakawa S."/>
            <person name="Taudien S."/>
            <person name="Garber M."/>
            <person name="Kodira C.D."/>
            <person name="Schueler M.G."/>
            <person name="Shimizu A."/>
            <person name="Whittaker C.A."/>
            <person name="Chang J.L."/>
            <person name="Cuomo C.A."/>
            <person name="Dewar K."/>
            <person name="FitzGerald M.G."/>
            <person name="Yang X."/>
            <person name="Allen N.R."/>
            <person name="Anderson S."/>
            <person name="Asakawa T."/>
            <person name="Blechschmidt K."/>
            <person name="Bloom T."/>
            <person name="Borowsky M.L."/>
            <person name="Butler J."/>
            <person name="Cook A."/>
            <person name="Corum B."/>
            <person name="DeArellano K."/>
            <person name="DeCaprio D."/>
            <person name="Dooley K.T."/>
            <person name="Dorris L. III"/>
            <person name="Engels R."/>
            <person name="Gloeckner G."/>
            <person name="Hafez N."/>
            <person name="Hagopian D.S."/>
            <person name="Hall J.L."/>
            <person name="Ishikawa S.K."/>
            <person name="Jaffe D.B."/>
            <person name="Kamat A."/>
            <person name="Kudoh J."/>
            <person name="Lehmann R."/>
            <person name="Lokitsang T."/>
            <person name="Macdonald P."/>
            <person name="Major J.E."/>
            <person name="Matthews C.D."/>
            <person name="Mauceli E."/>
            <person name="Menzel U."/>
            <person name="Mihalev A.H."/>
            <person name="Minoshima S."/>
            <person name="Murayama Y."/>
            <person name="Naylor J.W."/>
            <person name="Nicol R."/>
            <person name="Nguyen C."/>
            <person name="O'Leary S.B."/>
            <person name="O'Neill K."/>
            <person name="Parker S.C.J."/>
            <person name="Polley A."/>
            <person name="Raymond C.K."/>
            <person name="Reichwald K."/>
            <person name="Rodriguez J."/>
            <person name="Sasaki T."/>
            <person name="Schilhabel M."/>
            <person name="Siddiqui R."/>
            <person name="Smith C.L."/>
            <person name="Sneddon T.P."/>
            <person name="Talamas J.A."/>
            <person name="Tenzin P."/>
            <person name="Topham K."/>
            <person name="Venkataraman V."/>
            <person name="Wen G."/>
            <person name="Yamazaki S."/>
            <person name="Young S.K."/>
            <person name="Zeng Q."/>
            <person name="Zimmer A.R."/>
            <person name="Rosenthal A."/>
            <person name="Birren B.W."/>
            <person name="Platzer M."/>
            <person name="Shimizu N."/>
            <person name="Lander E.S."/>
        </authorList>
    </citation>
    <scope>NUCLEOTIDE SEQUENCE [LARGE SCALE GENOMIC DNA]</scope>
</reference>
<reference key="4">
    <citation type="journal article" date="2004" name="Genome Res.">
        <title>The status, quality, and expansion of the NIH full-length cDNA project: the Mammalian Gene Collection (MGC).</title>
        <authorList>
            <consortium name="The MGC Project Team"/>
        </authorList>
    </citation>
    <scope>NUCLEOTIDE SEQUENCE [LARGE SCALE MRNA] (ISOFORM 2)</scope>
    <source>
        <tissue>Testis</tissue>
    </source>
</reference>
<reference key="5">
    <citation type="submission" date="1998-09" db="EMBL/GenBank/DDBJ databases">
        <title>A ADAM-like cDNA sequence identified in cDNA library of human epididymis.</title>
        <authorList>
            <person name="Liu H.W."/>
            <person name="Lin Y.C."/>
            <person name="Sun G.H."/>
        </authorList>
    </citation>
    <scope>NUCLEOTIDE SEQUENCE [MRNA] OF 167-754 (ISOFORM 1)</scope>
    <source>
        <tissue>Epididymis</tissue>
    </source>
</reference>
<reference key="6">
    <citation type="journal article" date="2011" name="Hum. Mutat.">
        <title>Analysis of the disintegrin-metalloproteinases family reveals ADAM29 and ADAM7 are often mutated in melanoma.</title>
        <authorList>
            <person name="Wei X."/>
            <person name="Moncada-Pazos A."/>
            <person name="Cal S."/>
            <person name="Soria-Valles C."/>
            <person name="Gartner J."/>
            <person name="Rudloff U."/>
            <person name="Lin J.C."/>
            <person name="Rosenberg S.A."/>
            <person name="Lopez-Otin C."/>
            <person name="Samuels Y."/>
        </authorList>
    </citation>
    <scope>TISSUE SPECIFICITY</scope>
    <scope>INVOLVEMENT IN CUTANEOUS MELANOMA</scope>
    <scope>VARIANTS SER-14; CYS-31; SER-36; TYR-106; PRO-173; ALA-180; TYR-243; GLU-302; ILE-359; GLU-533; LEU-593; LYS-639 AND ASN-703</scope>
    <scope>CHARACTERIZATION OF VARIANTS TYR-243; ILE-359; LYS-639 AND ASN-703</scope>
</reference>
<name>ADAM7_HUMAN</name>
<dbReference type="EMBL" id="AF215824">
    <property type="protein sequence ID" value="AAG43987.1"/>
    <property type="molecule type" value="mRNA"/>
</dbReference>
<dbReference type="EMBL" id="AK292492">
    <property type="protein sequence ID" value="BAF85181.1"/>
    <property type="molecule type" value="mRNA"/>
</dbReference>
<dbReference type="EMBL" id="AC024958">
    <property type="status" value="NOT_ANNOTATED_CDS"/>
    <property type="molecule type" value="Genomic_DNA"/>
</dbReference>
<dbReference type="EMBL" id="AC120193">
    <property type="status" value="NOT_ANNOTATED_CDS"/>
    <property type="molecule type" value="Genomic_DNA"/>
</dbReference>
<dbReference type="EMBL" id="BC058037">
    <property type="protein sequence ID" value="AAH58037.1"/>
    <property type="molecule type" value="mRNA"/>
</dbReference>
<dbReference type="EMBL" id="AF090327">
    <property type="protein sequence ID" value="AAC36742.1"/>
    <property type="molecule type" value="mRNA"/>
</dbReference>
<dbReference type="CCDS" id="CCDS6045.1">
    <molecule id="Q9H2U9-1"/>
</dbReference>
<dbReference type="RefSeq" id="NP_003808.2">
    <molecule id="Q9H2U9-1"/>
    <property type="nucleotide sequence ID" value="NM_003817.4"/>
</dbReference>
<dbReference type="SMR" id="Q9H2U9"/>
<dbReference type="BioGRID" id="114292">
    <property type="interactions" value="52"/>
</dbReference>
<dbReference type="FunCoup" id="Q9H2U9">
    <property type="interactions" value="10"/>
</dbReference>
<dbReference type="IntAct" id="Q9H2U9">
    <property type="interactions" value="33"/>
</dbReference>
<dbReference type="STRING" id="9606.ENSP00000175238"/>
<dbReference type="MEROPS" id="M12.956"/>
<dbReference type="GlyCosmos" id="Q9H2U9">
    <property type="glycosylation" value="6 sites, No reported glycans"/>
</dbReference>
<dbReference type="GlyGen" id="Q9H2U9">
    <property type="glycosylation" value="6 sites"/>
</dbReference>
<dbReference type="iPTMnet" id="Q9H2U9"/>
<dbReference type="PhosphoSitePlus" id="Q9H2U9"/>
<dbReference type="SwissPalm" id="Q9H2U9"/>
<dbReference type="BioMuta" id="ADAM7"/>
<dbReference type="DMDM" id="296439449"/>
<dbReference type="jPOST" id="Q9H2U9"/>
<dbReference type="MassIVE" id="Q9H2U9"/>
<dbReference type="PaxDb" id="9606-ENSP00000175238"/>
<dbReference type="PeptideAtlas" id="Q9H2U9"/>
<dbReference type="ProteomicsDB" id="67078"/>
<dbReference type="ProteomicsDB" id="80599">
    <molecule id="Q9H2U9-1"/>
</dbReference>
<dbReference type="Antibodypedia" id="22842">
    <property type="antibodies" value="81 antibodies from 22 providers"/>
</dbReference>
<dbReference type="DNASU" id="8756"/>
<dbReference type="Ensembl" id="ENST00000175238.10">
    <molecule id="Q9H2U9-1"/>
    <property type="protein sequence ID" value="ENSP00000175238.5"/>
    <property type="gene ID" value="ENSG00000069206.15"/>
</dbReference>
<dbReference type="Ensembl" id="ENST00000441335.6">
    <molecule id="Q9H2U9-2"/>
    <property type="protein sequence ID" value="ENSP00000393073.2"/>
    <property type="gene ID" value="ENSG00000069206.15"/>
</dbReference>
<dbReference type="GeneID" id="8756"/>
<dbReference type="KEGG" id="hsa:8756"/>
<dbReference type="MANE-Select" id="ENST00000175238.10">
    <property type="protein sequence ID" value="ENSP00000175238.5"/>
    <property type="RefSeq nucleotide sequence ID" value="NM_003817.4"/>
    <property type="RefSeq protein sequence ID" value="NP_003808.2"/>
</dbReference>
<dbReference type="UCSC" id="uc003xea.2">
    <molecule id="Q9H2U9-1"/>
    <property type="organism name" value="human"/>
</dbReference>
<dbReference type="AGR" id="HGNC:214"/>
<dbReference type="CTD" id="8756"/>
<dbReference type="DisGeNET" id="8756"/>
<dbReference type="GeneCards" id="ADAM7"/>
<dbReference type="HGNC" id="HGNC:214">
    <property type="gene designation" value="ADAM7"/>
</dbReference>
<dbReference type="HPA" id="ENSG00000069206">
    <property type="expression patterns" value="Tissue enriched (epididymis)"/>
</dbReference>
<dbReference type="MIM" id="607310">
    <property type="type" value="gene"/>
</dbReference>
<dbReference type="neXtProt" id="NX_Q9H2U9"/>
<dbReference type="OpenTargets" id="ENSG00000069206"/>
<dbReference type="PharmGKB" id="PA24532"/>
<dbReference type="VEuPathDB" id="HostDB:ENSG00000069206"/>
<dbReference type="eggNOG" id="KOG3607">
    <property type="taxonomic scope" value="Eukaryota"/>
</dbReference>
<dbReference type="GeneTree" id="ENSGT00940000161406"/>
<dbReference type="HOGENOM" id="CLU_1309742_0_0_1"/>
<dbReference type="InParanoid" id="Q9H2U9"/>
<dbReference type="OMA" id="RFSTWQE"/>
<dbReference type="OrthoDB" id="5951731at2759"/>
<dbReference type="PAN-GO" id="Q9H2U9">
    <property type="GO annotations" value="3 GO annotations based on evolutionary models"/>
</dbReference>
<dbReference type="PhylomeDB" id="Q9H2U9"/>
<dbReference type="TreeFam" id="TF314733"/>
<dbReference type="PathwayCommons" id="Q9H2U9"/>
<dbReference type="BioGRID-ORCS" id="8756">
    <property type="hits" value="12 hits in 1155 CRISPR screens"/>
</dbReference>
<dbReference type="GenomeRNAi" id="8756"/>
<dbReference type="Pharos" id="Q9H2U9">
    <property type="development level" value="Tbio"/>
</dbReference>
<dbReference type="PRO" id="PR:Q9H2U9"/>
<dbReference type="Proteomes" id="UP000005640">
    <property type="component" value="Chromosome 8"/>
</dbReference>
<dbReference type="RNAct" id="Q9H2U9">
    <property type="molecule type" value="protein"/>
</dbReference>
<dbReference type="Bgee" id="ENSG00000069206">
    <property type="expression patterns" value="Expressed in corpus epididymis and 16 other cell types or tissues"/>
</dbReference>
<dbReference type="ExpressionAtlas" id="Q9H2U9">
    <property type="expression patterns" value="baseline and differential"/>
</dbReference>
<dbReference type="GO" id="GO:0009986">
    <property type="term" value="C:cell surface"/>
    <property type="evidence" value="ECO:0007669"/>
    <property type="project" value="Ensembl"/>
</dbReference>
<dbReference type="GO" id="GO:0005886">
    <property type="term" value="C:plasma membrane"/>
    <property type="evidence" value="ECO:0000318"/>
    <property type="project" value="GO_Central"/>
</dbReference>
<dbReference type="GO" id="GO:0004222">
    <property type="term" value="F:metalloendopeptidase activity"/>
    <property type="evidence" value="ECO:0000318"/>
    <property type="project" value="GO_Central"/>
</dbReference>
<dbReference type="GO" id="GO:1905867">
    <property type="term" value="P:epididymis development"/>
    <property type="evidence" value="ECO:0000250"/>
    <property type="project" value="UniProtKB"/>
</dbReference>
<dbReference type="GO" id="GO:0003382">
    <property type="term" value="P:epithelial cell morphogenesis"/>
    <property type="evidence" value="ECO:0000250"/>
    <property type="project" value="UniProtKB"/>
</dbReference>
<dbReference type="GO" id="GO:1902093">
    <property type="term" value="P:positive regulation of flagellated sperm motility"/>
    <property type="evidence" value="ECO:0000250"/>
    <property type="project" value="UniProtKB"/>
</dbReference>
<dbReference type="GO" id="GO:1902492">
    <property type="term" value="P:positive regulation of sperm capacitation"/>
    <property type="evidence" value="ECO:0000250"/>
    <property type="project" value="UniProtKB"/>
</dbReference>
<dbReference type="GO" id="GO:0006508">
    <property type="term" value="P:proteolysis"/>
    <property type="evidence" value="ECO:0000318"/>
    <property type="project" value="GO_Central"/>
</dbReference>
<dbReference type="CDD" id="cd04269">
    <property type="entry name" value="ZnMc_adamalysin_II_like"/>
    <property type="match status" value="1"/>
</dbReference>
<dbReference type="FunFam" id="3.40.390.10:FF:000002">
    <property type="entry name" value="Disintegrin and metalloproteinase domain-containing protein 22"/>
    <property type="match status" value="1"/>
</dbReference>
<dbReference type="FunFam" id="4.10.70.10:FF:000001">
    <property type="entry name" value="Disintegrin and metalloproteinase domain-containing protein 22"/>
    <property type="match status" value="1"/>
</dbReference>
<dbReference type="Gene3D" id="3.40.390.10">
    <property type="entry name" value="Collagenase (Catalytic Domain)"/>
    <property type="match status" value="1"/>
</dbReference>
<dbReference type="Gene3D" id="4.10.70.10">
    <property type="entry name" value="Disintegrin domain"/>
    <property type="match status" value="1"/>
</dbReference>
<dbReference type="InterPro" id="IPR006586">
    <property type="entry name" value="ADAM_Cys-rich"/>
</dbReference>
<dbReference type="InterPro" id="IPR018358">
    <property type="entry name" value="Disintegrin_CS"/>
</dbReference>
<dbReference type="InterPro" id="IPR001762">
    <property type="entry name" value="Disintegrin_dom"/>
</dbReference>
<dbReference type="InterPro" id="IPR036436">
    <property type="entry name" value="Disintegrin_dom_sf"/>
</dbReference>
<dbReference type="InterPro" id="IPR024079">
    <property type="entry name" value="MetalloPept_cat_dom_sf"/>
</dbReference>
<dbReference type="InterPro" id="IPR001590">
    <property type="entry name" value="Peptidase_M12B"/>
</dbReference>
<dbReference type="InterPro" id="IPR002870">
    <property type="entry name" value="Peptidase_M12B_N"/>
</dbReference>
<dbReference type="InterPro" id="IPR034027">
    <property type="entry name" value="Reprolysin_adamalysin"/>
</dbReference>
<dbReference type="PANTHER" id="PTHR11905">
    <property type="entry name" value="ADAM A DISINTEGRIN AND METALLOPROTEASE DOMAIN"/>
    <property type="match status" value="1"/>
</dbReference>
<dbReference type="PANTHER" id="PTHR11905:SF21">
    <property type="entry name" value="DISINTEGRIN AND METALLOPROTEINASE DOMAIN-CONTAINING PROTEIN 7"/>
    <property type="match status" value="1"/>
</dbReference>
<dbReference type="Pfam" id="PF08516">
    <property type="entry name" value="ADAM_CR"/>
    <property type="match status" value="1"/>
</dbReference>
<dbReference type="Pfam" id="PF00200">
    <property type="entry name" value="Disintegrin"/>
    <property type="match status" value="1"/>
</dbReference>
<dbReference type="Pfam" id="PF01562">
    <property type="entry name" value="Pep_M12B_propep"/>
    <property type="match status" value="1"/>
</dbReference>
<dbReference type="Pfam" id="PF01421">
    <property type="entry name" value="Reprolysin"/>
    <property type="match status" value="1"/>
</dbReference>
<dbReference type="PRINTS" id="PR00289">
    <property type="entry name" value="DISINTEGRIN"/>
</dbReference>
<dbReference type="SMART" id="SM00608">
    <property type="entry name" value="ACR"/>
    <property type="match status" value="1"/>
</dbReference>
<dbReference type="SMART" id="SM00050">
    <property type="entry name" value="DISIN"/>
    <property type="match status" value="1"/>
</dbReference>
<dbReference type="SUPFAM" id="SSF57552">
    <property type="entry name" value="Blood coagulation inhibitor (disintegrin)"/>
    <property type="match status" value="1"/>
</dbReference>
<dbReference type="SUPFAM" id="SSF55486">
    <property type="entry name" value="Metalloproteases ('zincins'), catalytic domain"/>
    <property type="match status" value="1"/>
</dbReference>
<dbReference type="PROSITE" id="PS50215">
    <property type="entry name" value="ADAM_MEPRO"/>
    <property type="match status" value="1"/>
</dbReference>
<dbReference type="PROSITE" id="PS00427">
    <property type="entry name" value="DISINTEGRIN_1"/>
    <property type="match status" value="1"/>
</dbReference>
<dbReference type="PROSITE" id="PS50214">
    <property type="entry name" value="DISINTEGRIN_2"/>
    <property type="match status" value="1"/>
</dbReference>
<accession>Q9H2U9</accession>
<accession>A8K8X7</accession>
<accession>O75959</accession>
<accession>Q6PEJ6</accession>